<proteinExistence type="inferred from homology"/>
<feature type="chain" id="PRO_0000148080" description="ATP-dependent protease subunit HslV">
    <location>
        <begin position="1"/>
        <end position="180"/>
    </location>
</feature>
<feature type="active site" evidence="1">
    <location>
        <position position="7"/>
    </location>
</feature>
<feature type="binding site" evidence="1">
    <location>
        <position position="165"/>
    </location>
    <ligand>
        <name>Na(+)</name>
        <dbReference type="ChEBI" id="CHEBI:29101"/>
    </ligand>
</feature>
<feature type="binding site" evidence="1">
    <location>
        <position position="168"/>
    </location>
    <ligand>
        <name>Na(+)</name>
        <dbReference type="ChEBI" id="CHEBI:29101"/>
    </ligand>
</feature>
<feature type="binding site" evidence="1">
    <location>
        <position position="171"/>
    </location>
    <ligand>
        <name>Na(+)</name>
        <dbReference type="ChEBI" id="CHEBI:29101"/>
    </ligand>
</feature>
<sequence>MGNFHATTIFAVHHNGECAMAGDGQVTMGNAVVMKHTARKVRKLFQGKVLAGFAGSVADAFTLFEMFEGKLEEYNGNLQRAAVEMAKQWRGDKMLRQLEAMLIVMDKTTMLLVSGTGEVIEPDDGILAIGSGGNYALSAGRALKQYASEHLTAKQIAKASLEIAGDICVYTNHNIIVEEL</sequence>
<name>HSLV_BACCZ</name>
<reference key="1">
    <citation type="journal article" date="2006" name="J. Bacteriol.">
        <title>Pathogenomic sequence analysis of Bacillus cereus and Bacillus thuringiensis isolates closely related to Bacillus anthracis.</title>
        <authorList>
            <person name="Han C.S."/>
            <person name="Xie G."/>
            <person name="Challacombe J.F."/>
            <person name="Altherr M.R."/>
            <person name="Bhotika S.S."/>
            <person name="Bruce D."/>
            <person name="Campbell C.S."/>
            <person name="Campbell M.L."/>
            <person name="Chen J."/>
            <person name="Chertkov O."/>
            <person name="Cleland C."/>
            <person name="Dimitrijevic M."/>
            <person name="Doggett N.A."/>
            <person name="Fawcett J.J."/>
            <person name="Glavina T."/>
            <person name="Goodwin L.A."/>
            <person name="Hill K.K."/>
            <person name="Hitchcock P."/>
            <person name="Jackson P.J."/>
            <person name="Keim P."/>
            <person name="Kewalramani A.R."/>
            <person name="Longmire J."/>
            <person name="Lucas S."/>
            <person name="Malfatti S."/>
            <person name="McMurry K."/>
            <person name="Meincke L.J."/>
            <person name="Misra M."/>
            <person name="Moseman B.L."/>
            <person name="Mundt M."/>
            <person name="Munk A.C."/>
            <person name="Okinaka R.T."/>
            <person name="Parson-Quintana B."/>
            <person name="Reilly L.P."/>
            <person name="Richardson P."/>
            <person name="Robinson D.L."/>
            <person name="Rubin E."/>
            <person name="Saunders E."/>
            <person name="Tapia R."/>
            <person name="Tesmer J.G."/>
            <person name="Thayer N."/>
            <person name="Thompson L.S."/>
            <person name="Tice H."/>
            <person name="Ticknor L.O."/>
            <person name="Wills P.L."/>
            <person name="Brettin T.S."/>
            <person name="Gilna P."/>
        </authorList>
    </citation>
    <scope>NUCLEOTIDE SEQUENCE [LARGE SCALE GENOMIC DNA]</scope>
    <source>
        <strain>ZK / E33L</strain>
    </source>
</reference>
<organism>
    <name type="scientific">Bacillus cereus (strain ZK / E33L)</name>
    <dbReference type="NCBI Taxonomy" id="288681"/>
    <lineage>
        <taxon>Bacteria</taxon>
        <taxon>Bacillati</taxon>
        <taxon>Bacillota</taxon>
        <taxon>Bacilli</taxon>
        <taxon>Bacillales</taxon>
        <taxon>Bacillaceae</taxon>
        <taxon>Bacillus</taxon>
        <taxon>Bacillus cereus group</taxon>
    </lineage>
</organism>
<protein>
    <recommendedName>
        <fullName evidence="1">ATP-dependent protease subunit HslV</fullName>
        <ecNumber evidence="1">3.4.25.2</ecNumber>
    </recommendedName>
</protein>
<keyword id="KW-0021">Allosteric enzyme</keyword>
<keyword id="KW-0963">Cytoplasm</keyword>
<keyword id="KW-0378">Hydrolase</keyword>
<keyword id="KW-0479">Metal-binding</keyword>
<keyword id="KW-0645">Protease</keyword>
<keyword id="KW-0915">Sodium</keyword>
<keyword id="KW-0888">Threonine protease</keyword>
<comment type="function">
    <text evidence="1">Protease subunit of a proteasome-like degradation complex believed to be a general protein degrading machinery.</text>
</comment>
<comment type="catalytic activity">
    <reaction evidence="1">
        <text>ATP-dependent cleavage of peptide bonds with broad specificity.</text>
        <dbReference type="EC" id="3.4.25.2"/>
    </reaction>
</comment>
<comment type="activity regulation">
    <text evidence="1">Allosterically activated by HslU binding.</text>
</comment>
<comment type="subunit">
    <text evidence="1">A double ring-shaped homohexamer of HslV is capped on each side by a ring-shaped HslU homohexamer. The assembly of the HslU/HslV complex is dependent on binding of ATP.</text>
</comment>
<comment type="subcellular location">
    <subcellularLocation>
        <location evidence="1">Cytoplasm</location>
    </subcellularLocation>
</comment>
<comment type="similarity">
    <text evidence="1">Belongs to the peptidase T1B family. HslV subfamily.</text>
</comment>
<gene>
    <name evidence="1" type="primary">hslV</name>
    <name type="ordered locus">BCE33L3589</name>
</gene>
<accession>Q636J6</accession>
<evidence type="ECO:0000255" key="1">
    <source>
        <dbReference type="HAMAP-Rule" id="MF_00248"/>
    </source>
</evidence>
<dbReference type="EC" id="3.4.25.2" evidence="1"/>
<dbReference type="EMBL" id="CP000001">
    <property type="protein sequence ID" value="AAU16678.1"/>
    <property type="molecule type" value="Genomic_DNA"/>
</dbReference>
<dbReference type="RefSeq" id="WP_000526272.1">
    <property type="nucleotide sequence ID" value="NZ_CP009968.1"/>
</dbReference>
<dbReference type="SMR" id="Q636J6"/>
<dbReference type="MEROPS" id="T01.007"/>
<dbReference type="GeneID" id="45023658"/>
<dbReference type="KEGG" id="bcz:BCE33L3589"/>
<dbReference type="PATRIC" id="fig|288681.22.peg.1822"/>
<dbReference type="Proteomes" id="UP000002612">
    <property type="component" value="Chromosome"/>
</dbReference>
<dbReference type="GO" id="GO:0009376">
    <property type="term" value="C:HslUV protease complex"/>
    <property type="evidence" value="ECO:0007669"/>
    <property type="project" value="UniProtKB-UniRule"/>
</dbReference>
<dbReference type="GO" id="GO:0005839">
    <property type="term" value="C:proteasome core complex"/>
    <property type="evidence" value="ECO:0007669"/>
    <property type="project" value="InterPro"/>
</dbReference>
<dbReference type="GO" id="GO:0046872">
    <property type="term" value="F:metal ion binding"/>
    <property type="evidence" value="ECO:0007669"/>
    <property type="project" value="UniProtKB-KW"/>
</dbReference>
<dbReference type="GO" id="GO:0004298">
    <property type="term" value="F:threonine-type endopeptidase activity"/>
    <property type="evidence" value="ECO:0007669"/>
    <property type="project" value="UniProtKB-KW"/>
</dbReference>
<dbReference type="GO" id="GO:0051603">
    <property type="term" value="P:proteolysis involved in protein catabolic process"/>
    <property type="evidence" value="ECO:0007669"/>
    <property type="project" value="InterPro"/>
</dbReference>
<dbReference type="CDD" id="cd01913">
    <property type="entry name" value="protease_HslV"/>
    <property type="match status" value="1"/>
</dbReference>
<dbReference type="Gene3D" id="3.60.20.10">
    <property type="entry name" value="Glutamine Phosphoribosylpyrophosphate, subunit 1, domain 1"/>
    <property type="match status" value="1"/>
</dbReference>
<dbReference type="HAMAP" id="MF_00248">
    <property type="entry name" value="HslV"/>
    <property type="match status" value="1"/>
</dbReference>
<dbReference type="InterPro" id="IPR022281">
    <property type="entry name" value="ATP-dep_Prtase_HsIV_su"/>
</dbReference>
<dbReference type="InterPro" id="IPR029055">
    <property type="entry name" value="Ntn_hydrolases_N"/>
</dbReference>
<dbReference type="InterPro" id="IPR001353">
    <property type="entry name" value="Proteasome_sua/b"/>
</dbReference>
<dbReference type="InterPro" id="IPR023333">
    <property type="entry name" value="Proteasome_suB-type"/>
</dbReference>
<dbReference type="NCBIfam" id="TIGR03692">
    <property type="entry name" value="ATP_dep_HslV"/>
    <property type="match status" value="1"/>
</dbReference>
<dbReference type="NCBIfam" id="NF003964">
    <property type="entry name" value="PRK05456.1"/>
    <property type="match status" value="1"/>
</dbReference>
<dbReference type="PANTHER" id="PTHR32194:SF0">
    <property type="entry name" value="ATP-DEPENDENT PROTEASE SUBUNIT HSLV"/>
    <property type="match status" value="1"/>
</dbReference>
<dbReference type="PANTHER" id="PTHR32194">
    <property type="entry name" value="METALLOPROTEASE TLDD"/>
    <property type="match status" value="1"/>
</dbReference>
<dbReference type="Pfam" id="PF00227">
    <property type="entry name" value="Proteasome"/>
    <property type="match status" value="1"/>
</dbReference>
<dbReference type="PIRSF" id="PIRSF039093">
    <property type="entry name" value="HslV"/>
    <property type="match status" value="1"/>
</dbReference>
<dbReference type="SUPFAM" id="SSF56235">
    <property type="entry name" value="N-terminal nucleophile aminohydrolases (Ntn hydrolases)"/>
    <property type="match status" value="1"/>
</dbReference>
<dbReference type="PROSITE" id="PS51476">
    <property type="entry name" value="PROTEASOME_BETA_2"/>
    <property type="match status" value="1"/>
</dbReference>